<organism evidence="40">
    <name type="scientific">Caenorhabditis elegans</name>
    <dbReference type="NCBI Taxonomy" id="6239"/>
    <lineage>
        <taxon>Eukaryota</taxon>
        <taxon>Metazoa</taxon>
        <taxon>Ecdysozoa</taxon>
        <taxon>Nematoda</taxon>
        <taxon>Chromadorea</taxon>
        <taxon>Rhabditida</taxon>
        <taxon>Rhabditina</taxon>
        <taxon>Rhabditomorpha</taxon>
        <taxon>Rhabditoidea</taxon>
        <taxon>Rhabditidae</taxon>
        <taxon>Peloderinae</taxon>
        <taxon>Caenorhabditis</taxon>
    </lineage>
</organism>
<dbReference type="EMBL" id="AF116529">
    <property type="protein sequence ID" value="AAD05570.1"/>
    <property type="molecule type" value="mRNA"/>
</dbReference>
<dbReference type="EMBL" id="BX284601">
    <property type="protein sequence ID" value="CCD61908.1"/>
    <property type="molecule type" value="Genomic_DNA"/>
</dbReference>
<dbReference type="PIR" id="T34024">
    <property type="entry name" value="T34024"/>
</dbReference>
<dbReference type="RefSeq" id="NP_491686.1">
    <property type="nucleotide sequence ID" value="NM_059285.4"/>
</dbReference>
<dbReference type="SMR" id="G5EDT1"/>
<dbReference type="ComplexPortal" id="CPX-1100">
    <property type="entry name" value="DRM complex"/>
</dbReference>
<dbReference type="ComplexPortal" id="CPX-1138">
    <property type="entry name" value="RB1-E2F1-TFDP1 transcription repressor complex"/>
</dbReference>
<dbReference type="ComplexPortal" id="CPX-1146">
    <property type="entry name" value="RB1-E2F2-TFDP1 transcription repressor complex"/>
</dbReference>
<dbReference type="FunCoup" id="G5EDT1">
    <property type="interactions" value="2280"/>
</dbReference>
<dbReference type="IntAct" id="G5EDT1">
    <property type="interactions" value="9"/>
</dbReference>
<dbReference type="MINT" id="G5EDT1"/>
<dbReference type="STRING" id="6239.C32F10.2.1"/>
<dbReference type="iPTMnet" id="G5EDT1"/>
<dbReference type="PaxDb" id="6239-C32F10.2"/>
<dbReference type="PeptideAtlas" id="G5EDT1"/>
<dbReference type="EnsemblMetazoa" id="C32F10.2.1">
    <property type="protein sequence ID" value="C32F10.2.1"/>
    <property type="gene ID" value="WBGene00003020"/>
</dbReference>
<dbReference type="GeneID" id="172249"/>
<dbReference type="KEGG" id="cel:CELE_C32F10.2"/>
<dbReference type="AGR" id="WB:WBGene00003020"/>
<dbReference type="CTD" id="172249"/>
<dbReference type="WormBase" id="C32F10.2">
    <property type="protein sequence ID" value="CE24823"/>
    <property type="gene ID" value="WBGene00003020"/>
    <property type="gene designation" value="lin-35"/>
</dbReference>
<dbReference type="eggNOG" id="KOG1010">
    <property type="taxonomic scope" value="Eukaryota"/>
</dbReference>
<dbReference type="GeneTree" id="ENSGT00950000183202"/>
<dbReference type="HOGENOM" id="CLU_312900_0_0_1"/>
<dbReference type="InParanoid" id="G5EDT1"/>
<dbReference type="OMA" id="AILCELH"/>
<dbReference type="OrthoDB" id="844594at2759"/>
<dbReference type="PhylomeDB" id="G5EDT1"/>
<dbReference type="Reactome" id="R-CEL-1538133">
    <property type="pathway name" value="G0 and Early G1"/>
</dbReference>
<dbReference type="Reactome" id="R-CEL-2173796">
    <property type="pathway name" value="SMAD2/SMAD3:SMAD4 heterotrimer regulates transcription"/>
</dbReference>
<dbReference type="Reactome" id="R-CEL-69231">
    <property type="pathway name" value="Cyclin D associated events in G1"/>
</dbReference>
<dbReference type="PRO" id="PR:G5EDT1"/>
<dbReference type="Proteomes" id="UP000001940">
    <property type="component" value="Chromosome I"/>
</dbReference>
<dbReference type="Bgee" id="WBGene00003020">
    <property type="expression patterns" value="Expressed in germ line (C elegans) and 4 other cell types or tissues"/>
</dbReference>
<dbReference type="GO" id="GO:0000785">
    <property type="term" value="C:chromatin"/>
    <property type="evidence" value="ECO:0000318"/>
    <property type="project" value="GO_Central"/>
</dbReference>
<dbReference type="GO" id="GO:0070176">
    <property type="term" value="C:DRM complex"/>
    <property type="evidence" value="ECO:0000314"/>
    <property type="project" value="ComplexPortal"/>
</dbReference>
<dbReference type="GO" id="GO:0005634">
    <property type="term" value="C:nucleus"/>
    <property type="evidence" value="ECO:0000314"/>
    <property type="project" value="WormBase"/>
</dbReference>
<dbReference type="GO" id="GO:0035189">
    <property type="term" value="C:Rb-E2F complex"/>
    <property type="evidence" value="ECO:0000314"/>
    <property type="project" value="ComplexPortal"/>
</dbReference>
<dbReference type="GO" id="GO:0005667">
    <property type="term" value="C:transcription regulator complex"/>
    <property type="evidence" value="ECO:0000318"/>
    <property type="project" value="GO_Central"/>
</dbReference>
<dbReference type="GO" id="GO:0000977">
    <property type="term" value="F:RNA polymerase II transcription regulatory region sequence-specific DNA binding"/>
    <property type="evidence" value="ECO:0000318"/>
    <property type="project" value="GO_Central"/>
</dbReference>
<dbReference type="GO" id="GO:0030154">
    <property type="term" value="P:cell differentiation"/>
    <property type="evidence" value="ECO:0000318"/>
    <property type="project" value="GO_Central"/>
</dbReference>
<dbReference type="GO" id="GO:0009792">
    <property type="term" value="P:embryo development ending in birth or egg hatching"/>
    <property type="evidence" value="ECO:0000316"/>
    <property type="project" value="WormBase"/>
</dbReference>
<dbReference type="GO" id="GO:0048557">
    <property type="term" value="P:embryonic digestive tract morphogenesis"/>
    <property type="evidence" value="ECO:0000316"/>
    <property type="project" value="WormBase"/>
</dbReference>
<dbReference type="GO" id="GO:0008406">
    <property type="term" value="P:gonad development"/>
    <property type="evidence" value="ECO:0000316"/>
    <property type="project" value="UniProtKB"/>
</dbReference>
<dbReference type="GO" id="GO:1902807">
    <property type="term" value="P:negative regulation of cell cycle G1/S phase transition"/>
    <property type="evidence" value="ECO:0000316"/>
    <property type="project" value="UniProtKB"/>
</dbReference>
<dbReference type="GO" id="GO:0032876">
    <property type="term" value="P:negative regulation of DNA endoreduplication"/>
    <property type="evidence" value="ECO:0000316"/>
    <property type="project" value="UniProtKB"/>
</dbReference>
<dbReference type="GO" id="GO:2000134">
    <property type="term" value="P:negative regulation of G1/S transition of mitotic cell cycle"/>
    <property type="evidence" value="ECO:0000318"/>
    <property type="project" value="GO_Central"/>
</dbReference>
<dbReference type="GO" id="GO:0045930">
    <property type="term" value="P:negative regulation of mitotic cell cycle"/>
    <property type="evidence" value="ECO:0000316"/>
    <property type="project" value="WormBase"/>
</dbReference>
<dbReference type="GO" id="GO:0016479">
    <property type="term" value="P:negative regulation of transcription by RNA polymerase I"/>
    <property type="evidence" value="ECO:0000250"/>
    <property type="project" value="WormBase"/>
</dbReference>
<dbReference type="GO" id="GO:0040027">
    <property type="term" value="P:negative regulation of vulval development"/>
    <property type="evidence" value="ECO:0000314"/>
    <property type="project" value="ComplexPortal"/>
</dbReference>
<dbReference type="GO" id="GO:0002119">
    <property type="term" value="P:nematode larval development"/>
    <property type="evidence" value="ECO:0000315"/>
    <property type="project" value="UniProtKB"/>
</dbReference>
<dbReference type="GO" id="GO:0090727">
    <property type="term" value="P:positive regulation of brood size"/>
    <property type="evidence" value="ECO:0000315"/>
    <property type="project" value="UniProtKB"/>
</dbReference>
<dbReference type="GO" id="GO:0040018">
    <property type="term" value="P:positive regulation of multicellular organism growth"/>
    <property type="evidence" value="ECO:0000316"/>
    <property type="project" value="WormBase"/>
</dbReference>
<dbReference type="GO" id="GO:1902806">
    <property type="term" value="P:regulation of cell cycle G1/S phase transition"/>
    <property type="evidence" value="ECO:0000316"/>
    <property type="project" value="UniProtKB"/>
</dbReference>
<dbReference type="GO" id="GO:0051302">
    <property type="term" value="P:regulation of cell division"/>
    <property type="evidence" value="ECO:0000316"/>
    <property type="project" value="UniProtKB"/>
</dbReference>
<dbReference type="GO" id="GO:0006355">
    <property type="term" value="P:regulation of DNA-templated transcription"/>
    <property type="evidence" value="ECO:0000315"/>
    <property type="project" value="ComplexPortal"/>
</dbReference>
<dbReference type="GO" id="GO:0006357">
    <property type="term" value="P:regulation of transcription by RNA polymerase II"/>
    <property type="evidence" value="ECO:0007669"/>
    <property type="project" value="InterPro"/>
</dbReference>
<dbReference type="GO" id="GO:0022414">
    <property type="term" value="P:reproductive process"/>
    <property type="evidence" value="ECO:0000315"/>
    <property type="project" value="WormBase"/>
</dbReference>
<dbReference type="CDD" id="cd20548">
    <property type="entry name" value="CYCLIN_RB-like"/>
    <property type="match status" value="1"/>
</dbReference>
<dbReference type="FunFam" id="1.10.472.10:FF:000250">
    <property type="entry name" value="Retinoblastoma-like protein A"/>
    <property type="match status" value="1"/>
</dbReference>
<dbReference type="Gene3D" id="1.10.472.140">
    <property type="match status" value="1"/>
</dbReference>
<dbReference type="Gene3D" id="1.10.472.10">
    <property type="entry name" value="Cyclin-like"/>
    <property type="match status" value="2"/>
</dbReference>
<dbReference type="InterPro" id="IPR036915">
    <property type="entry name" value="Cyclin-like_sf"/>
</dbReference>
<dbReference type="InterPro" id="IPR002720">
    <property type="entry name" value="RB_A"/>
</dbReference>
<dbReference type="InterPro" id="IPR002719">
    <property type="entry name" value="RB_B"/>
</dbReference>
<dbReference type="InterPro" id="IPR028309">
    <property type="entry name" value="RB_fam"/>
</dbReference>
<dbReference type="InterPro" id="IPR024599">
    <property type="entry name" value="RB_N"/>
</dbReference>
<dbReference type="PANTHER" id="PTHR13742:SF17">
    <property type="entry name" value="RE32990P-RELATED"/>
    <property type="match status" value="1"/>
</dbReference>
<dbReference type="PANTHER" id="PTHR13742">
    <property type="entry name" value="RETINOBLASTOMA-ASSOCIATED PROTEIN RB -RELATED"/>
    <property type="match status" value="1"/>
</dbReference>
<dbReference type="Pfam" id="PF11934">
    <property type="entry name" value="DUF3452"/>
    <property type="match status" value="1"/>
</dbReference>
<dbReference type="Pfam" id="PF01858">
    <property type="entry name" value="RB_A"/>
    <property type="match status" value="1"/>
</dbReference>
<dbReference type="Pfam" id="PF01857">
    <property type="entry name" value="RB_B"/>
    <property type="match status" value="1"/>
</dbReference>
<dbReference type="SMART" id="SM01367">
    <property type="entry name" value="DUF3452"/>
    <property type="match status" value="1"/>
</dbReference>
<dbReference type="SMART" id="SM01368">
    <property type="entry name" value="RB_A"/>
    <property type="match status" value="1"/>
</dbReference>
<dbReference type="SUPFAM" id="SSF47954">
    <property type="entry name" value="Cyclin-like"/>
    <property type="match status" value="2"/>
</dbReference>
<evidence type="ECO:0000256" key="1">
    <source>
        <dbReference type="SAM" id="MobiDB-lite"/>
    </source>
</evidence>
<evidence type="ECO:0000269" key="2">
    <source>
    </source>
</evidence>
<evidence type="ECO:0000269" key="3">
    <source>
    </source>
</evidence>
<evidence type="ECO:0000269" key="4">
    <source>
    </source>
</evidence>
<evidence type="ECO:0000269" key="5">
    <source>
    </source>
</evidence>
<evidence type="ECO:0000269" key="6">
    <source>
    </source>
</evidence>
<evidence type="ECO:0000269" key="7">
    <source>
    </source>
</evidence>
<evidence type="ECO:0000269" key="8">
    <source>
    </source>
</evidence>
<evidence type="ECO:0000269" key="9">
    <source>
    </source>
</evidence>
<evidence type="ECO:0000269" key="10">
    <source>
    </source>
</evidence>
<evidence type="ECO:0000269" key="11">
    <source>
    </source>
</evidence>
<evidence type="ECO:0000269" key="12">
    <source>
    </source>
</evidence>
<evidence type="ECO:0000269" key="13">
    <source>
    </source>
</evidence>
<evidence type="ECO:0000269" key="14">
    <source>
    </source>
</evidence>
<evidence type="ECO:0000269" key="15">
    <source>
    </source>
</evidence>
<evidence type="ECO:0000269" key="16">
    <source>
    </source>
</evidence>
<evidence type="ECO:0000269" key="17">
    <source>
    </source>
</evidence>
<evidence type="ECO:0000269" key="18">
    <source>
    </source>
</evidence>
<evidence type="ECO:0000269" key="19">
    <source>
    </source>
</evidence>
<evidence type="ECO:0000269" key="20">
    <source>
    </source>
</evidence>
<evidence type="ECO:0000269" key="21">
    <source>
    </source>
</evidence>
<evidence type="ECO:0000269" key="22">
    <source>
    </source>
</evidence>
<evidence type="ECO:0000269" key="23">
    <source>
    </source>
</evidence>
<evidence type="ECO:0000269" key="24">
    <source>
    </source>
</evidence>
<evidence type="ECO:0000269" key="25">
    <source>
    </source>
</evidence>
<evidence type="ECO:0000269" key="26">
    <source>
    </source>
</evidence>
<evidence type="ECO:0000269" key="27">
    <source>
    </source>
</evidence>
<evidence type="ECO:0000269" key="28">
    <source>
    </source>
</evidence>
<evidence type="ECO:0000269" key="29">
    <source>
    </source>
</evidence>
<evidence type="ECO:0000269" key="30">
    <source>
    </source>
</evidence>
<evidence type="ECO:0000269" key="31">
    <source>
    </source>
</evidence>
<evidence type="ECO:0000269" key="32">
    <source>
    </source>
</evidence>
<evidence type="ECO:0000269" key="33">
    <source>
    </source>
</evidence>
<evidence type="ECO:0000269" key="34">
    <source>
    </source>
</evidence>
<evidence type="ECO:0000305" key="35"/>
<evidence type="ECO:0000305" key="36">
    <source>
    </source>
</evidence>
<evidence type="ECO:0000305" key="37">
    <source>
    </source>
</evidence>
<evidence type="ECO:0000305" key="38">
    <source>
    </source>
</evidence>
<evidence type="ECO:0000312" key="39">
    <source>
        <dbReference type="EMBL" id="AAD05570.1"/>
    </source>
</evidence>
<evidence type="ECO:0000312" key="40">
    <source>
        <dbReference type="Proteomes" id="UP000001940"/>
    </source>
</evidence>
<evidence type="ECO:0000312" key="41">
    <source>
        <dbReference type="WormBase" id="C32F10.2"/>
    </source>
</evidence>
<feature type="chain" id="PRO_0000441023" description="Retinoblastoma-like protein homolog lin-35" evidence="35">
    <location>
        <begin position="1"/>
        <end position="961"/>
    </location>
</feature>
<feature type="region of interest" description="Disordered" evidence="1">
    <location>
        <begin position="1"/>
        <end position="43"/>
    </location>
</feature>
<feature type="region of interest" description="Disordered" evidence="1">
    <location>
        <begin position="55"/>
        <end position="129"/>
    </location>
</feature>
<feature type="compositionally biased region" description="Polar residues" evidence="1">
    <location>
        <begin position="68"/>
        <end position="81"/>
    </location>
</feature>
<feature type="compositionally biased region" description="Acidic residues" evidence="1">
    <location>
        <begin position="107"/>
        <end position="119"/>
    </location>
</feature>
<feature type="modified residue" description="Phosphoserine; by CDK4" evidence="30">
    <location>
        <position position="714"/>
    </location>
</feature>
<feature type="modified residue" description="Phosphothreonine; by CDK4" evidence="30">
    <location>
        <position position="719"/>
    </location>
</feature>
<feature type="mutagenesis site" description="In n745; on a ubc-18 mutant background, 4% of larvae display a Pun (pharyngeal unattached) phenotype, whereby the pharynx fails to elongate and form an attachment to the anterior alimentary opening or buccal cavity." evidence="6">
    <location>
        <begin position="151"/>
        <end position="961"/>
    </location>
</feature>
<comment type="function">
    <text evidence="3 4 5 6 7 8 9 10 11 13 15 16 17 18 19 20 21 22 23 24 25 26 27 29 30 31 32 34 36 37 38">Key regulator of cell division which acts as a transcriptional repressor and negatively regulates cell cycle progression in its active unphosphorylated form, but allows cell cycle progression when phosphorylated (PubMed:11684669, PubMed:12062054, PubMed:16287966, PubMed:17466069, PubMed:25562820). When unphosphorylated and in its active form, interacts with E2F transcription factors such as efl-1 to repress their transcriptional activity and negatively regulate the progression through the G1 phase of the cell cycle during postembryonic development (PubMed:11684669, PubMed:12062054, PubMed:15238519, PubMed:17466069, PubMed:25562820). May furthermore act with cell cycle regulator cki-1 to negatively regulate cell cycle progression (PubMed:11684669). Acts redundantly with lin-53, fzr-1 and lin-23 to control cell cycle progression by regulating the expression of G1 phase cyclins (PubMed:11850412, PubMed:25562820). In particular, negatively regulates the expression of the cyclin E homolog cye-1, which is essential for the G1/S phase transition (PubMed:16287966, PubMed:17466069). Regulates cell division in the intestinal lineage, repressing the expression of genes such as cdc-25.2, which are required for intestinal cells to transition from the karyokinesis cell cycle (also known as nuclear division) to endoreplication, a specific growth pathway in the intestinal epithelium required for feeding and gut development in growing larvae during the L1 stage molt (PubMed:17466069, PubMed:27104746). Its role as a transcriptional repressor in the regulation of intestinal cell division during postembryonic development is most likely in complex with an E2F cell cycle regulatory transcription factor efl-1 and its binding partner the synthetic multivulva class B protein dpl-1 (PubMed:17466069). Synthetic multivulva (synMuv) class B protein (PubMed:11850412, PubMed:9875852). SynMuv proteins are required to repress the induction of vulval development by Ras signaling and probably act by forming the multiprotein DRM complex that represses transcription (PubMed:17075059, PubMed:9875852). Together with synMuv class B protein lin-53, and redundantly with synMuv class A protein lin-15A, represses transcription to control vulval development, most likely through antagonization of the Ras-signaling pathway in the major hypodermal syncytium hyp7 (PubMed:15621535, PubMed:16624904, PubMed:26100681, PubMed:9875852). Acts redundantly with the transcriptional corepressor spr-1 and the zinc finger protein zfp-2 to play a role in vulval morphogenesis, promote germline proliferation and somatic gonad development (PubMed:17070797, PubMed:17417969). Acts redundantly with ubc-18 in the regulation of pharyngeal morphogenesis during embryonic development by negatively regulating the expression of proteins such as sup-35 (PubMed:12783801, PubMed:19521497, PubMed:24214340). Functions with the SWI/SNF complex and proteins such as pha-1 to regulate larval development (PubMed:15196946, PubMed:15280233). Functions redundantly with xnp-1 to regulate somatic gonad development (PubMed:15328017, PubMed:15649460). Acts redundantly with slr-2 to regulate the expression of intestinal genes required for nutrient utilization (PubMed:18437219, PubMed:22542970). Regulates transcription in response to starvation (PubMed:23664972). Furthermore, in response to starvation, promotes germ cell programmed cell death by negatively regulating the expression of the anti-apoptotic protein ced-9 (PubMed:17881492, PubMed:24752899). Conversely, in conjunction with mcd-1, efl-1 and the synthetic multivulva class B proteins dpl-1, lin-37 and lin-52, may also regulate transcription to promote programmed cell death independently of ced-1, ced-8 and ced-9 cell death pathways (PubMed:17237514). Directly involved in heterochromatin formation by maintaining overall chromatin structure and, in particular, that of constitutive heterochromatin by stabilizing histone methylation (PubMed:23347407). In particular, negatively regulates the expression of mes-4, a histone methyltransferase that controls the expression of germline specific genes (PubMed:23347407). May play a role in double strand break formation during meiosis (PubMed:15315757). May suppress sensitivity to RNAi (PubMed:16507136, PubMed:17417969). May play a role in the response to endoplasmic reticulum (ER) stress (PubMed:24715729).</text>
</comment>
<comment type="subunit">
    <text evidence="2 12 17 34">Component of the DRM complex, at least composed of lin-9, lin-35, lin-37, lin-52, lin-53, lin-54, dpl-1 and efl-1 (PubMed:17075059). Interacts with lin-53 (PubMed:9875852). Interacts (via C-terminus) with dpl-1 (via C-terminus) and efl-1 (via C-terminus) (PubMed:11463372). Interacts (via C-terminus) with lin-8 (PubMed:16020796).</text>
</comment>
<comment type="interaction">
    <interactant intactId="EBI-321470">
        <id>G5EDT1</id>
    </interactant>
    <interactant intactId="EBI-324825">
        <id>Q22703</id>
        <label>dpl-1</label>
    </interactant>
    <organismsDiffer>false</organismsDiffer>
    <experiments>2</experiments>
</comment>
<comment type="subcellular location">
    <subcellularLocation>
        <location evidence="10 25 30 34">Nucleus</location>
    </subcellularLocation>
    <text evidence="30">Expressed in dividing cells, but decreased expression after cell cycle exit.</text>
</comment>
<comment type="developmental stage">
    <text evidence="10 34">Expressed in embryos and newly hatched L1 larvae (PubMed:9875852). In older larvae and adults expressed in P(3-8).p vulval precursor cells and its descendents (PubMed:9875852). Expressed in the major hypodermal syncytium hyp7 during the L3 stage of larval development (PubMed:15621535).</text>
</comment>
<comment type="PTM">
    <text evidence="30">Phosphorylated by the cyclin dependent kinase cdk-4. Phosphorylation inhibits the transcriptional repressor activity of lin-35 and allows for progression through the G1 phase of the cell cycle during postembryonic development.</text>
</comment>
<comment type="disruption phenotype">
    <text evidence="3 7 8 9 11 14 15 16 18 19 20 22 24 28 30 31 33">Viable, but with a reduced fertility and brood size (PubMed:11684669, PubMed:15280233, PubMed:15328017, PubMed:17417969). Low penetrance defects including reduced integrity of the proximal gonad, a low percentage of endomitotic oocytes, distal tip cell migration defects and abnormalities in vulval morphology (PubMed:17417969). Some studies demonstrate aberrant intestinal nuclear divisions, with increased intestinal nuclei in growing larvae (PubMed:17466069). In addition there is increased sensitivity to RNA-induced gene silencing by RNAi (PubMed:16507136, PubMed:17417969). RNAi-mediated knockdown results in increased survival in response to ER stress inducer tunicamycin as compared to wild-type animals (PubMed:24715729). RNAi-mediated knockdown results in larval arrest at 25 degrees Celsius in an xpn-1 mutant background (PubMed:15649460). RNAi-mediated knockdown in a ced-1 mutant background results in reduced somatic cell apoptosis (PubMed:27650246). Double knockout with the synthetic multivulva class B protein lin-15A results in a multiple vulva (Muv) phenotype (PubMed:16624904, PubMed:26100681). Double knockout with either cdk-4 or cyd-1 rescues the cell cycle progression defect in the single cdk-4 and cyd-1 mutants (PubMed:11684669, PubMed:25562820). Double knockout with xnp-1 results in 43% embryonic lethality (PubMed:15328017). Surviving animals develop slowly, are small, sterile and display male and female gonad developmental defects characterized by shorter gonadal arms, fewer germ cells, an everted vulva phenotype, and failed formation of sheath and spermathecal cells (PubMed:15328017). Double knockout with spr-1 or zfp-2 results in defects in growth, vulval morphogenesis, somatic gonad development and fertility (PubMed:17070797, PubMed:17417969). Double knockout with the programmed cell death regulator mcd-1 results in 100% lethality during the L1 stage of larval development (PubMed:17237514). Programmed cell death defect in a ced-3 n2427 mutant background (PubMed:17237514). Knockout with RNAi-mediated knockdown of psa-1, ham-3, swsn-2.2, swsn-3 or swsn-6 (components of the SWI/SNF complex) results in larval arrest during larval development (PubMed:15280233). Knockout with RNAi-mediated knockdown of pha-1 (developmental protein), snfc-5 or swsn-8 (additional SWI/SNF complex components) results in sterility and/or a protruding vulva phenotype (PubMed:15196946, PubMed:15280233). Double knockout with slr-2 results in early larval arrest due to mis-regulation of intestinal specific gene expression, which results in starvation-induced growth arrest (PubMed:18437219, PubMed:22542970).</text>
</comment>
<comment type="similarity">
    <text evidence="35">Belongs to the retinoblastoma protein (RB) family.</text>
</comment>
<protein>
    <recommendedName>
        <fullName evidence="35">Retinoblastoma-like protein homolog lin-35</fullName>
    </recommendedName>
    <alternativeName>
        <fullName evidence="41">Abnormal cell lineage protein 35</fullName>
    </alternativeName>
    <alternativeName>
        <fullName evidence="35">Synthetic multivulva protein lin-35</fullName>
    </alternativeName>
</protein>
<proteinExistence type="evidence at protein level"/>
<keyword id="KW-0131">Cell cycle</keyword>
<keyword id="KW-0238">DNA-binding</keyword>
<keyword id="KW-0539">Nucleus</keyword>
<keyword id="KW-0597">Phosphoprotein</keyword>
<keyword id="KW-1185">Reference proteome</keyword>
<keyword id="KW-0678">Repressor</keyword>
<keyword id="KW-0804">Transcription</keyword>
<keyword id="KW-0805">Transcription regulation</keyword>
<sequence>MPKRAADEPGTSTTDPFHEQSPFDAVLAGTETTDTICEEPPAKRIDLDIKQEFNGGVQSGGLIKNESELTQMTIKQETEGNINEARREEEDEEQDEDSRTSMPPALGEDDDYEEDDADSFIDKTNTPPPSQSFLEGCRAANLPNDIVTGAWETYNHAVQRVSLEGSESAWQLSAIYYYLLSKGIKRRGKTIRILIQPFPVSILTIANSFDISVAEMLDKTARFVEIIHSRKIRRYQEYIRRIQEGLAVSCVIFKKFCRIFCKIFEEIKVGSENCPSSHELFTVLWTSFLVMKSRMTVDDLISNYQLLFSILDQVYTEMCSMKEGIVHHLNQKFVEDLLENDCTIIRALCTQFGGSVLDARHFSDHTFKKMEKTGIPSTWNFQEFRDLIMNVPKTAYENYLLQRGSIDERIFIPSVEDFSKIFQSPDTYSVADILKVSYSGRRFRDAEFLTKISNNHCLEKLALGGKVASEKLVTQSKEQPRVPCVEYNLELGNYPDDLESNNQSLYNRLTKIIGSWKLENSKLEEVCGTMSDSPMATILLKSDEMTNKFERTLSAELGETINENIPKYHYNVRKELELVFLIFMEKIIVAELKKKVREEDLLNVIRREEFLDSVFCFCVELILVSNGYDRPFPWSAELCGVHPFMFHKVIDLMITHEKQLSRQMVQHFSRIEETVIEYFSWKSDSPLWPMVVRCPFAHFQEFGEDWADKLNSYSPIKFTPIKKPDDLRDELGRPIVPQNQTSRTLRIFLKRTYFTAARRLQDLTDRVSMGARAKSQCWSLFDYLLRNDTLIFMDRHLDQILLCCVFVIMKINESSMLFTEIMAQYRRQSANSLLVYRSVTVFQEQLNPENPQAVNTKETILERLEGPQKEKTTVDIIKYYNIEFRDRIKYIIGQIDSASDEDLMEMPVATESGLMPVRVYLTHKLSIQTLPKTKHGESKQERAIANLEKSGITIAMERSGD</sequence>
<name>LIN35_CAEEL</name>
<accession>G5EDT1</accession>
<gene>
    <name evidence="41" type="primary">lin-35</name>
    <name evidence="41" type="ORF">C32F10.2</name>
</gene>
<reference evidence="39" key="1">
    <citation type="journal article" date="1998" name="Cell">
        <title>lin-35 and lin-53, two genes that antagonize a C. elegans Ras pathway, encode proteins similar to Rb and its binding protein RbAp48.</title>
        <authorList>
            <person name="Lu X."/>
            <person name="Horvitz H.R."/>
        </authorList>
    </citation>
    <scope>NUCLEOTIDE SEQUENCE [MRNA]</scope>
    <scope>FUNCTION</scope>
    <scope>INTERACTION WITH LIN-53</scope>
    <scope>SUBCELLULAR LOCATION</scope>
    <scope>DEVELOPMENTAL STAGE</scope>
</reference>
<reference evidence="40" key="2">
    <citation type="journal article" date="1998" name="Science">
        <title>Genome sequence of the nematode C. elegans: a platform for investigating biology.</title>
        <authorList>
            <consortium name="The C. elegans sequencing consortium"/>
        </authorList>
    </citation>
    <scope>NUCLEOTIDE SEQUENCE [LARGE SCALE GENOMIC DNA]</scope>
    <source>
        <strain evidence="40">Bristol N2</strain>
    </source>
</reference>
<reference evidence="35" key="3">
    <citation type="journal article" date="2001" name="Development">
        <title>lin-35 Rb and cki-1 Cip/Kip cooperate in developmental regulation of G1 progression in C. elegans.</title>
        <authorList>
            <person name="Boxem M."/>
            <person name="van den Heuvel S."/>
        </authorList>
    </citation>
    <scope>FUNCTION</scope>
    <scope>DISRUPTION PHENOTYPE</scope>
</reference>
<reference evidence="35" key="4">
    <citation type="journal article" date="2001" name="Mol. Cell">
        <title>dpl-1 DP and efl-1 E2F act with lin-35 Rb to antagonize Ras signaling in C.elegans vulval development.</title>
        <authorList>
            <person name="Ceol C.J."/>
            <person name="Horvitz H.R."/>
        </authorList>
    </citation>
    <scope>INTERACTION WITH DPL-1 AND EFL-1</scope>
</reference>
<reference evidence="35" key="5">
    <citation type="journal article" date="2002" name="Curr. Biol.">
        <title>C. elegans class B synthetic multivulva genes act in G(1) regulation.</title>
        <authorList>
            <person name="Boxem M."/>
            <person name="van den Heuvel S."/>
        </authorList>
    </citation>
    <scope>FUNCTION</scope>
</reference>
<reference evidence="35" key="6">
    <citation type="journal article" date="2002" name="Genes Dev.">
        <title>fzr-1 and lin-35/Rb function redundantly to control cell proliferation in C. elegans as revealed by a nonbiased synthetic screen.</title>
        <authorList>
            <person name="Fay D.S."/>
            <person name="Keenan S."/>
            <person name="Han M."/>
        </authorList>
    </citation>
    <scope>FUNCTION</scope>
</reference>
<reference evidence="35" key="7">
    <citation type="journal article" date="2003" name="Development">
        <title>lin-35/Rb and ubc-18, an E2 ubiquitin-conjugating enzyme, function redundantly to control pharyngeal morphogenesis in C. elegans.</title>
        <authorList>
            <person name="Fay D.S."/>
            <person name="Large E."/>
            <person name="Han M."/>
            <person name="Darland M."/>
        </authorList>
    </citation>
    <scope>FUNCTION</scope>
    <scope>MUTAGENESIS OF 151-TRP--ASP-961</scope>
</reference>
<reference evidence="35" key="8">
    <citation type="journal article" date="2004" name="Cell">
        <title>C. elegans HIM-17 links chromatin modification and competence for initiation of meiotic recombination.</title>
        <authorList>
            <person name="Reddy K.C."/>
            <person name="Villeneuve A.M."/>
        </authorList>
    </citation>
    <scope>FUNCTION</scope>
</reference>
<reference evidence="35" key="9">
    <citation type="journal article" date="2004" name="Dev. Biol.">
        <title>The coordinate regulation of pharyngeal development in C. elegans by lin-35/Rb, pha-1, and ubc-18.</title>
        <authorList>
            <person name="Fay D.S."/>
            <person name="Qiu X."/>
            <person name="Large E."/>
            <person name="Smith C.P."/>
            <person name="Mango S."/>
            <person name="Johanson B.L."/>
        </authorList>
    </citation>
    <scope>FUNCTION</scope>
    <scope>DISRUPTION PHENOTYPE</scope>
</reference>
<reference evidence="35" key="10">
    <citation type="journal article" date="2004" name="Dev. Biol.">
        <title>lin-35/Rb and xnp-1/ATR-X function redundantly to control somatic gonad development in C. elegans.</title>
        <authorList>
            <person name="Bender A.M."/>
            <person name="Wells O."/>
            <person name="Fay D.S."/>
        </authorList>
    </citation>
    <scope>FUNCTION</scope>
    <scope>DISRUPTION PHENOTYPE</scope>
</reference>
<reference evidence="35" key="11">
    <citation type="journal article" date="2004" name="Genetics">
        <title>Caenorhabditis elegans lin-35/Rb, efl-1/E2F and other synthetic multivulva genes negatively regulate the anaphase-promoting complex gene mat-3/APC8.</title>
        <authorList>
            <person name="Garbe D."/>
            <person name="Doto J.B."/>
            <person name="Sundaram M.V."/>
        </authorList>
    </citation>
    <scope>FUNCTION</scope>
</reference>
<reference evidence="35" key="12">
    <citation type="journal article" date="2004" name="Genetics">
        <title>lin-35/Rb cooperates with the SWI/SNF complex to control Caenorhabditis elegans larval development.</title>
        <authorList>
            <person name="Cui M."/>
            <person name="Fay D.S."/>
            <person name="Han M."/>
        </authorList>
    </citation>
    <scope>FUNCTION</scope>
    <scope>DISRUPTION PHENOTYPE</scope>
</reference>
<reference evidence="35" key="13">
    <citation type="journal article" date="2005" name="Dev. Biol.">
        <title>XNP-1/ATR-X acts with RB, HP1 and the NuRD complex during larval development in C. elegans.</title>
        <authorList>
            <person name="Cardoso C."/>
            <person name="Couillault C."/>
            <person name="Mignon-Ravix C."/>
            <person name="Millet A."/>
            <person name="Ewbank J.J."/>
            <person name="Fontes M."/>
            <person name="Pujol N."/>
        </authorList>
    </citation>
    <scope>FUNCTION</scope>
    <scope>DISRUPTION PHENOTYPE</scope>
</reference>
<reference evidence="35" key="14">
    <citation type="journal article" date="2005" name="Dev. Cell">
        <title>lin-35 Rb acts in the major hypodermis to oppose ras-mediated vulval induction in C. elegans.</title>
        <authorList>
            <person name="Myers T.R."/>
            <person name="Greenwald I."/>
        </authorList>
    </citation>
    <scope>FUNCTION</scope>
    <scope>SUBCELLULAR LOCATION</scope>
    <scope>DEVELOPMENTAL STAGE</scope>
</reference>
<reference evidence="35" key="15">
    <citation type="journal article" date="2005" name="Genetics">
        <title>lin-8, which antagonizes Caenorhabditis elegans Ras-mediated vulval induction, encodes a novel nuclear protein that interacts with the LIN-35 Rb protein.</title>
        <authorList>
            <person name="Davison E.M."/>
            <person name="Harrison M.M."/>
            <person name="Walhout A.J."/>
            <person name="Vidal M."/>
            <person name="Horvitz H.R."/>
        </authorList>
    </citation>
    <scope>INTERACTION WITH LIN-8</scope>
</reference>
<reference evidence="35" key="16">
    <citation type="journal article" date="2005" name="Proc. Natl. Acad. Sci. U.S.A.">
        <title>Negative regulation of nuclear divisions in Caenorhabditis elegans by retinoblastoma and RNA interference-related genes.</title>
        <authorList>
            <person name="Grishok A."/>
            <person name="Sharp P.A."/>
        </authorList>
    </citation>
    <scope>FUNCTION</scope>
</reference>
<reference evidence="35" key="17">
    <citation type="journal article" date="2006" name="Genetics">
        <title>Identification and classification of genes that act antagonistically to let-60 Ras signaling in Caenorhabditis elegans vulval development.</title>
        <authorList>
            <person name="Ceol C.J."/>
            <person name="Stegmeier F."/>
            <person name="Harrison M.M."/>
            <person name="Horvitz H.R."/>
        </authorList>
    </citation>
    <scope>FUNCTION</scope>
    <scope>DISRUPTION PHENOTYPE</scope>
</reference>
<reference evidence="35" key="18">
    <citation type="journal article" date="2006" name="Genome Biol.">
        <title>Loss of LIN-35, the Caenorhabditis elegans ortholog of the tumor suppressor p105Rb, results in enhanced RNA interference.</title>
        <authorList>
            <person name="Lehner B."/>
            <person name="Calixto A."/>
            <person name="Crombie C."/>
            <person name="Tischler J."/>
            <person name="Fortunato A."/>
            <person name="Chalfie M."/>
            <person name="Fraser A.G."/>
        </authorList>
    </citation>
    <scope>DISRUPTION PHENOTYPE</scope>
    <scope>FUNCTION</scope>
</reference>
<reference evidence="35" key="19">
    <citation type="journal article" date="2006" name="Proc. Natl. Acad. Sci. U.S.A.">
        <title>Some C. elegans class B synthetic multivulva proteins encode a conserved LIN-35 Rb-containing complex distinct from a NuRD-like complex.</title>
        <authorList>
            <person name="Harrison M.M."/>
            <person name="Ceol C.J."/>
            <person name="Lu X."/>
            <person name="Horvitz H.R."/>
        </authorList>
    </citation>
    <scope>FUNCTION</scope>
    <scope>IDENTIFICATION IN THE DRM COMPLEX</scope>
</reference>
<reference evidence="35" key="20">
    <citation type="journal article" date="2007" name="BMC Dev. Biol.">
        <title>Large-scale RNAi screens identify novel genes that interact with the C. elegans retinoblastoma pathway as well as splicing-related components with synMuv B activity.</title>
        <authorList>
            <person name="Ceron J."/>
            <person name="Rual J.F."/>
            <person name="Chandra A."/>
            <person name="Dupuy D."/>
            <person name="Vidal M."/>
            <person name="van den Heuvel S."/>
        </authorList>
    </citation>
    <scope>FUNCTION</scope>
    <scope>DISRUPTION PHENOTYPE</scope>
</reference>
<reference evidence="35" key="21">
    <citation type="journal article" date="2007" name="BMC Dev. Biol.">
        <title>The lin-35/Rb and RNAi pathways cooperate to regulate a key cell cycle transition in C. elegans.</title>
        <authorList>
            <person name="Ouellet J."/>
            <person name="Roy R."/>
        </authorList>
    </citation>
    <scope>FUNCTION</scope>
    <scope>DISRUPTION PHENOTYPE</scope>
</reference>
<reference evidence="35" key="22">
    <citation type="journal article" date="2007" name="Development">
        <title>C. elegans orthologs of components of the RB tumor suppressor complex have distinct pro-apoptotic functions.</title>
        <authorList>
            <person name="Schertel C."/>
            <person name="Conradt B."/>
        </authorList>
    </citation>
    <scope>FUNCTION</scope>
</reference>
<reference evidence="35" key="23">
    <citation type="journal article" date="2007" name="Dev. Biol.">
        <title>lin-35/Rb and the CoREST ortholog spr-1 coordinately regulate vulval morphogenesis and gonad development in C. elegans.</title>
        <authorList>
            <person name="Bender A.M."/>
            <person name="Kirienko N.V."/>
            <person name="Olson S.K."/>
            <person name="Esko J.D."/>
            <person name="Fay D.S."/>
        </authorList>
    </citation>
    <scope>FUNCTION</scope>
    <scope>DISRUPTION PHENOTYPE</scope>
</reference>
<reference evidence="35" key="24">
    <citation type="journal article" date="2007" name="Genetics">
        <title>DPL-1 DP, LIN-35 Rb and EFL-1 E2F act with the MCD-1 zinc-finger protein to promote programmed cell death in Caenorhabditis elegans.</title>
        <authorList>
            <person name="Reddien P.W."/>
            <person name="Andersen E.C."/>
            <person name="Huang M.C."/>
            <person name="Horvitz H.R."/>
        </authorList>
    </citation>
    <scope>FUNCTION</scope>
    <scope>DISRUPTION PHENOTYPE</scope>
</reference>
<reference evidence="35" key="25">
    <citation type="journal article" date="2008" name="PLoS Genet.">
        <title>Coordinated regulation of intestinal functions in C. elegans by LIN-35/Rb and SLR-2.</title>
        <authorList>
            <person name="Kirienko N.V."/>
            <person name="McEnerney J.D."/>
            <person name="Fay D.S."/>
        </authorList>
    </citation>
    <scope>FUNCTION</scope>
    <scope>DISRUPTION PHENOTYPE</scope>
</reference>
<reference evidence="35" key="26">
    <citation type="journal article" date="2009" name="PLoS Genet.">
        <title>A mechanistic basis for the coordinated regulation of pharyngeal morphogenesis in Caenorhabditis elegans by LIN-35/Rb and UBC-18-ARI-1.</title>
        <authorList>
            <person name="Mani K."/>
            <person name="Fay D.S."/>
        </authorList>
    </citation>
    <scope>FUNCTION</scope>
</reference>
<reference evidence="35" key="27">
    <citation type="journal article" date="2012" name="Genetics">
        <title>A network of genes antagonistic to the LIN-35 retinoblastoma protein of Caenorhabditis elegans.</title>
        <authorList>
            <person name="Polley S.R."/>
            <person name="Fay D.S."/>
        </authorList>
    </citation>
    <scope>FUNCTION</scope>
    <scope>DISRUPTION PHENOTYPE</scope>
</reference>
<reference evidence="35" key="28">
    <citation type="journal article" date="2013" name="Curr. Biol.">
        <title>The tumor suppressor Rb critically regulates starvation-induced stress response in C. elegans.</title>
        <authorList>
            <person name="Cui M."/>
            <person name="Cohen M.L."/>
            <person name="Teng C."/>
            <person name="Han M."/>
        </authorList>
    </citation>
    <scope>FUNCTION</scope>
</reference>
<reference evidence="35" key="29">
    <citation type="journal article" date="2013" name="Genome Biol.">
        <title>Tissue-specific direct targets of Caenorhabditis elegans Rb/E2F dictate distinct somatic and germline programs.</title>
        <authorList>
            <person name="Kudron M."/>
            <person name="Niu W."/>
            <person name="Lu Z."/>
            <person name="Wang G."/>
            <person name="Gerstein M."/>
            <person name="Snyder M."/>
            <person name="Reinke V."/>
        </authorList>
    </citation>
    <scope>FUNCTION</scope>
    <scope>SUBCELLULAR LOCATION</scope>
</reference>
<reference evidence="35" key="30">
    <citation type="journal article" date="2014" name="Genetics">
        <title>Implicating SCF complexes in organogenesis in Caenorhabditis elegans.</title>
        <authorList>
            <person name="Polley S.R."/>
            <person name="Kuzmanov A."/>
            <person name="Kuang J."/>
            <person name="Karpel J."/>
            <person name="Lazetic V."/>
            <person name="Karina E.I."/>
            <person name="Veo B.L."/>
            <person name="Fay D.S."/>
        </authorList>
    </citation>
    <scope>FUNCTION</scope>
</reference>
<reference evidence="35" key="31">
    <citation type="journal article" date="2014" name="Mol. Cell. Biol.">
        <title>LIN-35/Rb causes starvation-induced germ cell apoptosis via CED-9/Bcl2 downregulation in Caenorhabditis elegans.</title>
        <authorList>
            <person name="Lascarez-Lagunas L.I."/>
            <person name="Silva-Garcia C.G."/>
            <person name="Dinkova T.D."/>
            <person name="Navarro R.E."/>
        </authorList>
    </citation>
    <scope>FUNCTION</scope>
</reference>
<reference evidence="35" key="32">
    <citation type="journal article" date="2014" name="Proc. Natl. Acad. Sci. U.S.A.">
        <title>The Caenorhabditis elegans HP1 family protein HPL-2 maintains ER homeostasis through the UPR and hormesis.</title>
        <authorList>
            <person name="Kozlowski L."/>
            <person name="Garvis S."/>
            <person name="Bedet C."/>
            <person name="Palladino F."/>
        </authorList>
    </citation>
    <scope>FUNCTION</scope>
    <scope>DISRUPTION PHENOTYPE</scope>
</reference>
<reference evidence="35" key="33">
    <citation type="journal article" date="2015" name="G3 (Bethesda)">
        <title>A forward genetic screen for suppressors of somatic P granules in Caenorhabditis elegans.</title>
        <authorList>
            <person name="Kelly A.L."/>
            <person name="Senter-Zapata M.J."/>
            <person name="Campbell A.C."/>
            <person name="Lust H.E."/>
            <person name="Theriault M.E."/>
            <person name="Andralojc K.M."/>
            <person name="Updike D.L."/>
        </authorList>
    </citation>
    <scope>FUNCTION</scope>
    <scope>DISRUPTION PHENOTYPE</scope>
</reference>
<reference evidence="35" key="34">
    <citation type="journal article" date="2015" name="Nat. Commun.">
        <title>Rb and FZR1/Cdh1 determine CDK4/6-cyclin D requirement in C. elegans and human cancer cells.</title>
        <authorList>
            <person name="The I."/>
            <person name="Ruijtenberg S."/>
            <person name="Bouchet B.P."/>
            <person name="Cristobal A."/>
            <person name="Prinsen M.B."/>
            <person name="van Mourik T."/>
            <person name="Koreth J."/>
            <person name="Xu H."/>
            <person name="Heck A.J."/>
            <person name="Akhmanova A."/>
            <person name="Cuppen E."/>
            <person name="Boxem M."/>
            <person name="Munoz J."/>
            <person name="van den Heuvel S."/>
        </authorList>
    </citation>
    <scope>FUNCTION</scope>
    <scope>SUBCELLULAR LOCATION</scope>
    <scope>PHOSPHORYLATION AT SER-714 AND THR-719</scope>
    <scope>DISRUPTION PHENOTYPE</scope>
</reference>
<reference evidence="35" key="35">
    <citation type="journal article" date="2016" name="Cell Cycle">
        <title>CDC-25.2, a C. elegans ortholog of cdc25, is essential for the progression of intestinal divisions.</title>
        <authorList>
            <person name="Lee Y.U."/>
            <person name="Son M."/>
            <person name="Kim J."/>
            <person name="Shim Y.H."/>
            <person name="Kawasaki I."/>
        </authorList>
    </citation>
    <scope>FUNCTION</scope>
</reference>
<reference key="36">
    <citation type="journal article" date="2016" name="Sci. Rep.">
        <title>Somatically expressed germ-granule components, PGL-1 and PGL-3, repress programmed cell death in C. elegans.</title>
        <authorList>
            <person name="Al-Amin M."/>
            <person name="Min H."/>
            <person name="Shim Y.H."/>
            <person name="Kawasaki I."/>
        </authorList>
    </citation>
    <scope>DISRUPTION PHENOTYPE</scope>
</reference>